<sequence length="226" mass="24640">MSSQTPVVTVDGPSGAGKGTLCMLLSKKLGFQLLDSGAIYRVLALAAIHHGVDTESEDALVPLATHLDVQFVAEGDLVKVILEGEDVSKELRKEETGMAASKVAALPRVREALLRRQRAFEAAPGLVADGRDMGTVVFPNAKAKIFLDASAEERAHRRLKQLQDKGLDVRFDDLLSEIQERDDRDRNRPVAPLRPAEDALVLDSTSMSIDEVVEKALQYIESKLAE</sequence>
<gene>
    <name evidence="1" type="primary">cmk</name>
    <name type="ordered locus">VV1_2983</name>
</gene>
<accession>Q8D8J1</accession>
<comment type="catalytic activity">
    <reaction evidence="1">
        <text>CMP + ATP = CDP + ADP</text>
        <dbReference type="Rhea" id="RHEA:11600"/>
        <dbReference type="ChEBI" id="CHEBI:30616"/>
        <dbReference type="ChEBI" id="CHEBI:58069"/>
        <dbReference type="ChEBI" id="CHEBI:60377"/>
        <dbReference type="ChEBI" id="CHEBI:456216"/>
        <dbReference type="EC" id="2.7.4.25"/>
    </reaction>
</comment>
<comment type="catalytic activity">
    <reaction evidence="1">
        <text>dCMP + ATP = dCDP + ADP</text>
        <dbReference type="Rhea" id="RHEA:25094"/>
        <dbReference type="ChEBI" id="CHEBI:30616"/>
        <dbReference type="ChEBI" id="CHEBI:57566"/>
        <dbReference type="ChEBI" id="CHEBI:58593"/>
        <dbReference type="ChEBI" id="CHEBI:456216"/>
        <dbReference type="EC" id="2.7.4.25"/>
    </reaction>
</comment>
<comment type="subcellular location">
    <subcellularLocation>
        <location evidence="1">Cytoplasm</location>
    </subcellularLocation>
</comment>
<comment type="similarity">
    <text evidence="1">Belongs to the cytidylate kinase family. Type 1 subfamily.</text>
</comment>
<evidence type="ECO:0000255" key="1">
    <source>
        <dbReference type="HAMAP-Rule" id="MF_00238"/>
    </source>
</evidence>
<dbReference type="EC" id="2.7.4.25" evidence="1"/>
<dbReference type="EMBL" id="AE016795">
    <property type="protein sequence ID" value="AAO11313.1"/>
    <property type="molecule type" value="Genomic_DNA"/>
</dbReference>
<dbReference type="RefSeq" id="WP_011080798.1">
    <property type="nucleotide sequence ID" value="NC_004459.3"/>
</dbReference>
<dbReference type="SMR" id="Q8D8J1"/>
<dbReference type="GeneID" id="93894197"/>
<dbReference type="KEGG" id="vvu:VV1_2983"/>
<dbReference type="HOGENOM" id="CLU_079959_2_0_6"/>
<dbReference type="Proteomes" id="UP000002275">
    <property type="component" value="Chromosome 1"/>
</dbReference>
<dbReference type="GO" id="GO:0005829">
    <property type="term" value="C:cytosol"/>
    <property type="evidence" value="ECO:0007669"/>
    <property type="project" value="TreeGrafter"/>
</dbReference>
<dbReference type="GO" id="GO:0005524">
    <property type="term" value="F:ATP binding"/>
    <property type="evidence" value="ECO:0007669"/>
    <property type="project" value="UniProtKB-UniRule"/>
</dbReference>
<dbReference type="GO" id="GO:0036430">
    <property type="term" value="F:CMP kinase activity"/>
    <property type="evidence" value="ECO:0007669"/>
    <property type="project" value="RHEA"/>
</dbReference>
<dbReference type="GO" id="GO:0036431">
    <property type="term" value="F:dCMP kinase activity"/>
    <property type="evidence" value="ECO:0007669"/>
    <property type="project" value="RHEA"/>
</dbReference>
<dbReference type="GO" id="GO:0015949">
    <property type="term" value="P:nucleobase-containing small molecule interconversion"/>
    <property type="evidence" value="ECO:0007669"/>
    <property type="project" value="TreeGrafter"/>
</dbReference>
<dbReference type="GO" id="GO:0006220">
    <property type="term" value="P:pyrimidine nucleotide metabolic process"/>
    <property type="evidence" value="ECO:0007669"/>
    <property type="project" value="UniProtKB-UniRule"/>
</dbReference>
<dbReference type="CDD" id="cd02020">
    <property type="entry name" value="CMPK"/>
    <property type="match status" value="1"/>
</dbReference>
<dbReference type="FunFam" id="3.40.50.300:FF:000262">
    <property type="entry name" value="Cytidylate kinase"/>
    <property type="match status" value="1"/>
</dbReference>
<dbReference type="Gene3D" id="3.40.50.300">
    <property type="entry name" value="P-loop containing nucleotide triphosphate hydrolases"/>
    <property type="match status" value="1"/>
</dbReference>
<dbReference type="HAMAP" id="MF_00238">
    <property type="entry name" value="Cytidyl_kinase_type1"/>
    <property type="match status" value="1"/>
</dbReference>
<dbReference type="InterPro" id="IPR003136">
    <property type="entry name" value="Cytidylate_kin"/>
</dbReference>
<dbReference type="InterPro" id="IPR011994">
    <property type="entry name" value="Cytidylate_kinase_dom"/>
</dbReference>
<dbReference type="InterPro" id="IPR027417">
    <property type="entry name" value="P-loop_NTPase"/>
</dbReference>
<dbReference type="NCBIfam" id="TIGR00017">
    <property type="entry name" value="cmk"/>
    <property type="match status" value="1"/>
</dbReference>
<dbReference type="PANTHER" id="PTHR21299:SF2">
    <property type="entry name" value="CYTIDYLATE KINASE"/>
    <property type="match status" value="1"/>
</dbReference>
<dbReference type="PANTHER" id="PTHR21299">
    <property type="entry name" value="CYTIDYLATE KINASE/PANTOATE-BETA-ALANINE LIGASE"/>
    <property type="match status" value="1"/>
</dbReference>
<dbReference type="Pfam" id="PF02224">
    <property type="entry name" value="Cytidylate_kin"/>
    <property type="match status" value="1"/>
</dbReference>
<dbReference type="SUPFAM" id="SSF52540">
    <property type="entry name" value="P-loop containing nucleoside triphosphate hydrolases"/>
    <property type="match status" value="1"/>
</dbReference>
<protein>
    <recommendedName>
        <fullName evidence="1">Cytidylate kinase</fullName>
        <shortName evidence="1">CK</shortName>
        <ecNumber evidence="1">2.7.4.25</ecNumber>
    </recommendedName>
    <alternativeName>
        <fullName evidence="1">Cytidine monophosphate kinase</fullName>
        <shortName evidence="1">CMP kinase</shortName>
    </alternativeName>
</protein>
<proteinExistence type="inferred from homology"/>
<organism>
    <name type="scientific">Vibrio vulnificus (strain CMCP6)</name>
    <dbReference type="NCBI Taxonomy" id="216895"/>
    <lineage>
        <taxon>Bacteria</taxon>
        <taxon>Pseudomonadati</taxon>
        <taxon>Pseudomonadota</taxon>
        <taxon>Gammaproteobacteria</taxon>
        <taxon>Vibrionales</taxon>
        <taxon>Vibrionaceae</taxon>
        <taxon>Vibrio</taxon>
    </lineage>
</organism>
<feature type="chain" id="PRO_0000132000" description="Cytidylate kinase">
    <location>
        <begin position="1"/>
        <end position="226"/>
    </location>
</feature>
<feature type="binding site" evidence="1">
    <location>
        <begin position="12"/>
        <end position="20"/>
    </location>
    <ligand>
        <name>ATP</name>
        <dbReference type="ChEBI" id="CHEBI:30616"/>
    </ligand>
</feature>
<reference key="1">
    <citation type="submission" date="2002-12" db="EMBL/GenBank/DDBJ databases">
        <title>Complete genome sequence of Vibrio vulnificus CMCP6.</title>
        <authorList>
            <person name="Rhee J.H."/>
            <person name="Kim S.Y."/>
            <person name="Chung S.S."/>
            <person name="Kim J.J."/>
            <person name="Moon Y.H."/>
            <person name="Jeong H."/>
            <person name="Choy H.E."/>
        </authorList>
    </citation>
    <scope>NUCLEOTIDE SEQUENCE [LARGE SCALE GENOMIC DNA]</scope>
    <source>
        <strain>CMCP6</strain>
    </source>
</reference>
<keyword id="KW-0067">ATP-binding</keyword>
<keyword id="KW-0963">Cytoplasm</keyword>
<keyword id="KW-0418">Kinase</keyword>
<keyword id="KW-0547">Nucleotide-binding</keyword>
<keyword id="KW-0808">Transferase</keyword>
<name>KCY_VIBVU</name>